<dbReference type="EC" id="3.7.1.-" evidence="3"/>
<dbReference type="EMBL" id="KB644411">
    <property type="protein sequence ID" value="EPS29078.1"/>
    <property type="molecule type" value="Genomic_DNA"/>
</dbReference>
<dbReference type="SMR" id="S8ASK9"/>
<dbReference type="ESTHER" id="penox-poxo">
    <property type="family name" value="Duf_1100-S"/>
</dbReference>
<dbReference type="eggNOG" id="ENOG502QPTG">
    <property type="taxonomic scope" value="Eukaryota"/>
</dbReference>
<dbReference type="HOGENOM" id="CLU_034451_0_0_1"/>
<dbReference type="OrthoDB" id="249703at2759"/>
<dbReference type="PhylomeDB" id="S8ASK9"/>
<dbReference type="Proteomes" id="UP000019376">
    <property type="component" value="Unassembled WGS sequence"/>
</dbReference>
<dbReference type="GO" id="GO:0016787">
    <property type="term" value="F:hydrolase activity"/>
    <property type="evidence" value="ECO:0007669"/>
    <property type="project" value="UniProtKB-KW"/>
</dbReference>
<dbReference type="GO" id="GO:0017000">
    <property type="term" value="P:antibiotic biosynthetic process"/>
    <property type="evidence" value="ECO:0007669"/>
    <property type="project" value="UniProtKB-ARBA"/>
</dbReference>
<dbReference type="GO" id="GO:0072330">
    <property type="term" value="P:monocarboxylic acid biosynthetic process"/>
    <property type="evidence" value="ECO:0007669"/>
    <property type="project" value="UniProtKB-ARBA"/>
</dbReference>
<dbReference type="Gene3D" id="1.20.1440.110">
    <property type="entry name" value="acylaminoacyl peptidase"/>
    <property type="match status" value="1"/>
</dbReference>
<dbReference type="Gene3D" id="3.40.50.1820">
    <property type="entry name" value="alpha/beta hydrolase"/>
    <property type="match status" value="1"/>
</dbReference>
<dbReference type="InterPro" id="IPR029058">
    <property type="entry name" value="AB_hydrolase_fold"/>
</dbReference>
<dbReference type="InterPro" id="IPR010520">
    <property type="entry name" value="FrsA-like"/>
</dbReference>
<dbReference type="InterPro" id="IPR050261">
    <property type="entry name" value="FrsA_esterase"/>
</dbReference>
<dbReference type="PANTHER" id="PTHR22946:SF13">
    <property type="entry name" value="ALPHA_BETA HYDROLASE PSOB"/>
    <property type="match status" value="1"/>
</dbReference>
<dbReference type="PANTHER" id="PTHR22946">
    <property type="entry name" value="DIENELACTONE HYDROLASE DOMAIN-CONTAINING PROTEIN-RELATED"/>
    <property type="match status" value="1"/>
</dbReference>
<dbReference type="Pfam" id="PF06500">
    <property type="entry name" value="FrsA-like"/>
    <property type="match status" value="1"/>
</dbReference>
<dbReference type="SUPFAM" id="SSF53474">
    <property type="entry name" value="alpha/beta-Hydrolases"/>
    <property type="match status" value="1"/>
</dbReference>
<protein>
    <recommendedName>
        <fullName evidence="4">Hydrolyase poxO</fullName>
        <ecNumber evidence="3">3.7.1.-</ecNumber>
    </recommendedName>
    <alternativeName>
        <fullName evidence="4">Oxaleimides biosynthesis cluster protein O</fullName>
    </alternativeName>
</protein>
<evidence type="ECO:0000250" key="1">
    <source>
        <dbReference type="UniProtKB" id="Q4WZB3"/>
    </source>
</evidence>
<evidence type="ECO:0000250" key="2">
    <source>
        <dbReference type="UniProtKB" id="Q93NG6"/>
    </source>
</evidence>
<evidence type="ECO:0000269" key="3">
    <source>
    </source>
</evidence>
<evidence type="ECO:0000303" key="4">
    <source>
    </source>
</evidence>
<evidence type="ECO:0000305" key="5"/>
<evidence type="ECO:0000305" key="6">
    <source>
    </source>
</evidence>
<name>POXO_PENO1</name>
<comment type="function">
    <text evidence="3 6">Hydrolyase; part of the gene cluster that mediates the biosynthesis of oxaleimides, cytotoxic compounds containing an unusual disubstituted succinimide moiety (PubMed:28365998). The first step of the pathway is provided by the HR-PKS poxF that serves in a new mode of collaborative biosynthesis with the PKS-NRPS poxE, by providing the olefin containing amino acid substrate via the synthesis of an ACP-bound dec-4-enoate (PubMed:28365998). The cytochrome P450 monooxygenase poxM-catalyzed oxidation at the alpha-position creates the enzyme-bound 2-hydroxydec-4-enoyl-ACP thioester, which may be prone to spontaneous hydrolysis to yield 2-hydroxydec-4-enoic acid due to increased electrophilicity of the carbonyl (PubMed:28365998). 2-hydroxydec-4-enoic acid can then be further oxidized by poxM to yield the alpha-ketoacid 2-oxodec-4-enoicacid, which is reductively aminated by the aminotransferase poxL to yield (S,E)-2-aminodec-4-enoic acid (PubMed:28365998). The Hybrid PKS-NRPS synthetase poxE then performs condensation between the octaketide product of its PKS modules and the amino group of (S,E)-2-aminodec-4-enoic acid which is activated and incorporated by the adenylation domain (PubMed:28365998). The resulting aminoacyl product can be cyclized by the Diels-Alderase PoxQ and reductively released by the reductive (R) domain of poxE to yield an aldehyde intermediate (Probable) (PubMed:28365998). The released aldehyde is then substrate for a Knoevenagel condensation by the hydrolyase poxO followed by an oxidation at the 5-position of the pyrrolidone ring (PubMed:28365998). The presence of the olefin from the amino acid building block allows for migration of the substituted allyl group to occur (PubMed:28365998). This allylic transposition reaction takes place in a conjugate addition, semipinacol-like fashion to yield a succinimide intermediate (PubMed:28365998). Iterative two-electron oxidations of the C7 methyl of the succinimide intermediate to the carboxylic acid can be catalyzed by one of two remaining cytochrome P450 monooxygenasess poxC or poxD to yield oxaleimide A (PubMed:28365998). Subsequent oxidation yields the maleimide scaffold oxaleimide I (PubMed:28365998). Both oxaleimide A and oxaleimide I can undergo oxidative modifications in the decalin ring to yield the series of products oxaleimides B to H (PubMed:28365998).</text>
</comment>
<comment type="pathway">
    <text evidence="3">Secondary metabolite biosynthesis.</text>
</comment>
<comment type="subunit">
    <text evidence="2">Homodimer.</text>
</comment>
<comment type="induction">
    <text evidence="3">Expression is positively regulated by the oxaleimides biosynthesis cluster-specific transcription factor poxB.</text>
</comment>
<comment type="disruption phenotype">
    <text evidence="3">Impairs the productin of oxaleimides and leads to the accumulation of a trans-decalin containing alcohol intermediate.</text>
</comment>
<comment type="similarity">
    <text evidence="5">Belongs to the AB hydrolase superfamily. FUS2 hydrolase family.</text>
</comment>
<feature type="chain" id="PRO_0000453778" description="Hydrolyase poxO">
    <location>
        <begin position="1"/>
        <end position="421"/>
    </location>
</feature>
<feature type="active site" description="Nucleophile" evidence="1">
    <location>
        <position position="239"/>
    </location>
</feature>
<keyword id="KW-0378">Hydrolase</keyword>
<keyword id="KW-1185">Reference proteome</keyword>
<reference key="1">
    <citation type="journal article" date="2013" name="PLoS ONE">
        <title>Genomic and secretomic analyses reveal unique features of the lignocellulolytic enzyme system of Penicillium decumbens.</title>
        <authorList>
            <person name="Liu G."/>
            <person name="Zhang L."/>
            <person name="Wei X."/>
            <person name="Zou G."/>
            <person name="Qin Y."/>
            <person name="Ma L."/>
            <person name="Li J."/>
            <person name="Zheng H."/>
            <person name="Wang S."/>
            <person name="Wang C."/>
            <person name="Xun L."/>
            <person name="Zhao G.-P."/>
            <person name="Zhou Z."/>
            <person name="Qu Y."/>
        </authorList>
    </citation>
    <scope>NUCLEOTIDE SEQUENCE [LARGE SCALE GENOMIC DNA]</scope>
    <source>
        <strain>114-2 / CGMCC 5302</strain>
    </source>
</reference>
<reference key="2">
    <citation type="journal article" date="2017" name="J. Am. Chem. Soc.">
        <title>Collaborative Biosynthesis of Maleimide- and Succinimide-Containing Natural Products by Fungal Polyketide Megasynthases.</title>
        <authorList>
            <person name="Sato M."/>
            <person name="Dander J.E."/>
            <person name="Sato C."/>
            <person name="Hung Y.S."/>
            <person name="Gao S.S."/>
            <person name="Tang M.C."/>
            <person name="Hang L."/>
            <person name="Winter J.M."/>
            <person name="Garg N.K."/>
            <person name="Watanabe K."/>
            <person name="Tang Y."/>
        </authorList>
    </citation>
    <scope>FUNCTION</scope>
    <scope>INDUCTION</scope>
    <scope>DISRUPTION PHENOTYPE</scope>
    <scope>PATHWAY</scope>
</reference>
<reference key="3">
    <citation type="journal article" date="2020" name="Chem. Commun. (Camb.)">
        <title>Evidence for enzyme catalysed intramolecular [4+2] Diels-Alder cyclization during the biosynthesis of pyrichalasin H.</title>
        <authorList>
            <person name="Hantke V."/>
            <person name="Skellam E.J."/>
            <person name="Cox R.J."/>
        </authorList>
    </citation>
    <scope>FUNCTION</scope>
</reference>
<organism>
    <name type="scientific">Penicillium oxalicum (strain 114-2 / CGMCC 5302)</name>
    <name type="common">Penicillium decumbens</name>
    <dbReference type="NCBI Taxonomy" id="933388"/>
    <lineage>
        <taxon>Eukaryota</taxon>
        <taxon>Fungi</taxon>
        <taxon>Dikarya</taxon>
        <taxon>Ascomycota</taxon>
        <taxon>Pezizomycotina</taxon>
        <taxon>Eurotiomycetes</taxon>
        <taxon>Eurotiomycetidae</taxon>
        <taxon>Eurotiales</taxon>
        <taxon>Aspergillaceae</taxon>
        <taxon>Penicillium</taxon>
    </lineage>
</organism>
<sequence length="421" mass="46925">MHRFFKSEFFNFEFIRILSAAPYGGAEIAECLVAAGQITNDDPESWHRAWIIQADKAKALGDEALHSGDTVSARRAYLRASNYYRASGYMFHDRPGAPDARVLPLAQQVLDTYALTLPLLDTGEASQLKIPFENYQLAAYLYLPRDRTKPVPVLLSLGGADSIQEELYYVYAASGPQLGYAVLTFEGPGQGITLRRDKMHMRPDWEVVVGRVLDFLTAYMQQNPSVQLDLSRVAVVGASMGGYYALRAAVDPRIGACVSIDPFYDMWDFVRNHVSPALLNAWNAGWVPSRVVNGIMSMAMAASFQAKWEVGLAMWFFGVDSPTQTLRHMMKYTLARADGTSRLDQVKCPVLVSGATQSLYLEPESDVLRVFDALAHLGDERREIWIARSPEEGGLQAKIGAIGLVVQRTFRFLDQHLNVTR</sequence>
<accession>S8ASK9</accession>
<gene>
    <name evidence="4" type="primary">poxO</name>
    <name type="ORF">PDE_04027</name>
</gene>
<proteinExistence type="evidence at transcript level"/>